<gene>
    <name evidence="1" type="primary">rpmG</name>
    <name type="ordered locus">RAF_ORF1246</name>
</gene>
<organism>
    <name type="scientific">Rickettsia africae (strain ESF-5)</name>
    <dbReference type="NCBI Taxonomy" id="347255"/>
    <lineage>
        <taxon>Bacteria</taxon>
        <taxon>Pseudomonadati</taxon>
        <taxon>Pseudomonadota</taxon>
        <taxon>Alphaproteobacteria</taxon>
        <taxon>Rickettsiales</taxon>
        <taxon>Rickettsiaceae</taxon>
        <taxon>Rickettsieae</taxon>
        <taxon>Rickettsia</taxon>
        <taxon>spotted fever group</taxon>
    </lineage>
</organism>
<keyword id="KW-0687">Ribonucleoprotein</keyword>
<keyword id="KW-0689">Ribosomal protein</keyword>
<proteinExistence type="inferred from homology"/>
<comment type="similarity">
    <text evidence="1">Belongs to the bacterial ribosomal protein bL33 family.</text>
</comment>
<dbReference type="EMBL" id="CP001612">
    <property type="protein sequence ID" value="ACP54011.1"/>
    <property type="molecule type" value="Genomic_DNA"/>
</dbReference>
<dbReference type="RefSeq" id="WP_004997072.1">
    <property type="nucleotide sequence ID" value="NC_012633.1"/>
</dbReference>
<dbReference type="SMR" id="C3PM21"/>
<dbReference type="GeneID" id="95361741"/>
<dbReference type="KEGG" id="raf:RAF_ORF1246"/>
<dbReference type="HOGENOM" id="CLU_190949_1_0_5"/>
<dbReference type="Proteomes" id="UP000002305">
    <property type="component" value="Chromosome"/>
</dbReference>
<dbReference type="GO" id="GO:0005737">
    <property type="term" value="C:cytoplasm"/>
    <property type="evidence" value="ECO:0007669"/>
    <property type="project" value="UniProtKB-ARBA"/>
</dbReference>
<dbReference type="GO" id="GO:0015934">
    <property type="term" value="C:large ribosomal subunit"/>
    <property type="evidence" value="ECO:0007669"/>
    <property type="project" value="TreeGrafter"/>
</dbReference>
<dbReference type="GO" id="GO:0003735">
    <property type="term" value="F:structural constituent of ribosome"/>
    <property type="evidence" value="ECO:0007669"/>
    <property type="project" value="InterPro"/>
</dbReference>
<dbReference type="GO" id="GO:0006412">
    <property type="term" value="P:translation"/>
    <property type="evidence" value="ECO:0007669"/>
    <property type="project" value="UniProtKB-UniRule"/>
</dbReference>
<dbReference type="Gene3D" id="2.20.28.120">
    <property type="entry name" value="Ribosomal protein L33"/>
    <property type="match status" value="1"/>
</dbReference>
<dbReference type="HAMAP" id="MF_00294">
    <property type="entry name" value="Ribosomal_bL33"/>
    <property type="match status" value="1"/>
</dbReference>
<dbReference type="InterPro" id="IPR001705">
    <property type="entry name" value="Ribosomal_bL33"/>
</dbReference>
<dbReference type="InterPro" id="IPR018264">
    <property type="entry name" value="Ribosomal_bL33_CS"/>
</dbReference>
<dbReference type="InterPro" id="IPR038584">
    <property type="entry name" value="Ribosomal_bL33_sf"/>
</dbReference>
<dbReference type="InterPro" id="IPR011332">
    <property type="entry name" value="Ribosomal_zn-bd"/>
</dbReference>
<dbReference type="NCBIfam" id="NF001860">
    <property type="entry name" value="PRK00595.1"/>
    <property type="match status" value="1"/>
</dbReference>
<dbReference type="NCBIfam" id="TIGR01023">
    <property type="entry name" value="rpmG_bact"/>
    <property type="match status" value="1"/>
</dbReference>
<dbReference type="PANTHER" id="PTHR15238">
    <property type="entry name" value="54S RIBOSOMAL PROTEIN L39, MITOCHONDRIAL"/>
    <property type="match status" value="1"/>
</dbReference>
<dbReference type="PANTHER" id="PTHR15238:SF1">
    <property type="entry name" value="LARGE RIBOSOMAL SUBUNIT PROTEIN BL33M"/>
    <property type="match status" value="1"/>
</dbReference>
<dbReference type="Pfam" id="PF00471">
    <property type="entry name" value="Ribosomal_L33"/>
    <property type="match status" value="1"/>
</dbReference>
<dbReference type="SUPFAM" id="SSF57829">
    <property type="entry name" value="Zn-binding ribosomal proteins"/>
    <property type="match status" value="1"/>
</dbReference>
<dbReference type="PROSITE" id="PS00582">
    <property type="entry name" value="RIBOSOMAL_L33"/>
    <property type="match status" value="1"/>
</dbReference>
<accession>C3PM21</accession>
<sequence>MAKKNKNVLVRLVSTAGTGVFWVKKRNPKTQTEKLSFRKYDKVVRKHVLFKEEKIK</sequence>
<feature type="chain" id="PRO_1000204917" description="Large ribosomal subunit protein bL33">
    <location>
        <begin position="1"/>
        <end position="56"/>
    </location>
</feature>
<reference key="1">
    <citation type="journal article" date="2009" name="BMC Genomics">
        <title>Analysis of the Rickettsia africae genome reveals that virulence acquisition in Rickettsia species may be explained by genome reduction.</title>
        <authorList>
            <person name="Fournier P.-E."/>
            <person name="El Karkouri K."/>
            <person name="Leroy Q."/>
            <person name="Robert C."/>
            <person name="Giumelli B."/>
            <person name="Renesto P."/>
            <person name="Socolovschi C."/>
            <person name="Parola P."/>
            <person name="Audic S."/>
            <person name="Raoult D."/>
        </authorList>
    </citation>
    <scope>NUCLEOTIDE SEQUENCE [LARGE SCALE GENOMIC DNA]</scope>
    <source>
        <strain>ESF-5</strain>
    </source>
</reference>
<name>RL33_RICAE</name>
<evidence type="ECO:0000255" key="1">
    <source>
        <dbReference type="HAMAP-Rule" id="MF_00294"/>
    </source>
</evidence>
<evidence type="ECO:0000305" key="2"/>
<protein>
    <recommendedName>
        <fullName evidence="1">Large ribosomal subunit protein bL33</fullName>
    </recommendedName>
    <alternativeName>
        <fullName evidence="2">50S ribosomal protein L33</fullName>
    </alternativeName>
</protein>